<reference key="1">
    <citation type="journal article" date="1993" name="J. Biol. Chem.">
        <title>A novel tissue-specific calpain species expressed predominantly in the stomach comprises two alternative splicing products with and without Ca(2+)-binding domain.</title>
        <authorList>
            <person name="Sorimachi H."/>
            <person name="Ishiura S."/>
            <person name="Suzuki K."/>
        </authorList>
    </citation>
    <scope>NUCLEOTIDE SEQUENCE [MRNA] (ISOFORMS 1 AND 2)</scope>
    <scope>SUBCELLULAR LOCATION</scope>
    <scope>TISSUE SPECIFICITY</scope>
    <source>
        <tissue>Gastric mucosa</tissue>
    </source>
</reference>
<reference key="2">
    <citation type="journal article" date="2002" name="Biochem. Biophys. Res. Commun.">
        <title>Estrogen regulates a tissue-specific calpain in the anterior pituitary.</title>
        <authorList>
            <person name="Duan W.R."/>
            <person name="Ito M."/>
            <person name="Lee E.J."/>
            <person name="Chien P.-Y."/>
            <person name="Jameson J.L."/>
        </authorList>
    </citation>
    <scope>NUCLEOTIDE SEQUENCE [GENOMIC DNA] OF 1-17</scope>
    <scope>TISSUE SPECIFICITY</scope>
    <source>
        <strain>Sprague-Dawley</strain>
    </source>
</reference>
<organism>
    <name type="scientific">Rattus norvegicus</name>
    <name type="common">Rat</name>
    <dbReference type="NCBI Taxonomy" id="10116"/>
    <lineage>
        <taxon>Eukaryota</taxon>
        <taxon>Metazoa</taxon>
        <taxon>Chordata</taxon>
        <taxon>Craniata</taxon>
        <taxon>Vertebrata</taxon>
        <taxon>Euteleostomi</taxon>
        <taxon>Mammalia</taxon>
        <taxon>Eutheria</taxon>
        <taxon>Euarchontoglires</taxon>
        <taxon>Glires</taxon>
        <taxon>Rodentia</taxon>
        <taxon>Myomorpha</taxon>
        <taxon>Muroidea</taxon>
        <taxon>Muridae</taxon>
        <taxon>Murinae</taxon>
        <taxon>Rattus</taxon>
    </lineage>
</organism>
<evidence type="ECO:0000250" key="1"/>
<evidence type="ECO:0000255" key="2">
    <source>
        <dbReference type="PROSITE-ProRule" id="PRU00239"/>
    </source>
</evidence>
<evidence type="ECO:0000255" key="3">
    <source>
        <dbReference type="PROSITE-ProRule" id="PRU00448"/>
    </source>
</evidence>
<evidence type="ECO:0000269" key="4">
    <source>
    </source>
</evidence>
<evidence type="ECO:0000269" key="5">
    <source>
    </source>
</evidence>
<evidence type="ECO:0000303" key="6">
    <source>
    </source>
</evidence>
<evidence type="ECO:0000305" key="7"/>
<keyword id="KW-0025">Alternative splicing</keyword>
<keyword id="KW-0068">Autocatalytic cleavage</keyword>
<keyword id="KW-0106">Calcium</keyword>
<keyword id="KW-0963">Cytoplasm</keyword>
<keyword id="KW-0333">Golgi apparatus</keyword>
<keyword id="KW-0378">Hydrolase</keyword>
<keyword id="KW-0479">Metal-binding</keyword>
<keyword id="KW-0645">Protease</keyword>
<keyword id="KW-1185">Reference proteome</keyword>
<keyword id="KW-0677">Repeat</keyword>
<keyword id="KW-0788">Thiol protease</keyword>
<accession>Q78EJ9</accession>
<accession>Q64698</accession>
<accession>Q78EJ8</accession>
<accession>Q8K407</accession>
<gene>
    <name type="primary">Capn8</name>
    <name type="synonym">Cls4</name>
    <name type="synonym">Ncl2</name>
</gene>
<protein>
    <recommendedName>
        <fullName>Calpain-8</fullName>
        <ecNumber>3.4.22.53</ecNumber>
    </recommendedName>
    <alternativeName>
        <fullName>Calpain large subunit 4</fullName>
    </alternativeName>
    <alternativeName>
        <fullName>New calpain 2</fullName>
        <shortName>nCL-2</shortName>
    </alternativeName>
    <alternativeName>
        <fullName>Stomach-specific M-type calpain</fullName>
    </alternativeName>
</protein>
<dbReference type="EC" id="3.4.22.53"/>
<dbReference type="EMBL" id="D14478">
    <property type="protein sequence ID" value="BAA03369.1"/>
    <property type="molecule type" value="Transcribed_RNA"/>
</dbReference>
<dbReference type="EMBL" id="D14479">
    <property type="protein sequence ID" value="BAA03370.1"/>
    <property type="molecule type" value="mRNA"/>
</dbReference>
<dbReference type="EMBL" id="D14480">
    <property type="protein sequence ID" value="BAA03371.1"/>
    <property type="molecule type" value="mRNA"/>
</dbReference>
<dbReference type="EMBL" id="AF514419">
    <property type="protein sequence ID" value="AAM94284.1"/>
    <property type="molecule type" value="Genomic_DNA"/>
</dbReference>
<dbReference type="PIR" id="A48764">
    <property type="entry name" value="A48764"/>
</dbReference>
<dbReference type="RefSeq" id="NP_579843.2">
    <molecule id="Q78EJ9-1"/>
    <property type="nucleotide sequence ID" value="NM_133309.2"/>
</dbReference>
<dbReference type="SMR" id="Q78EJ9"/>
<dbReference type="FunCoup" id="Q78EJ9">
    <property type="interactions" value="52"/>
</dbReference>
<dbReference type="STRING" id="10116.ENSRNOP00000062898"/>
<dbReference type="MEROPS" id="C02.007"/>
<dbReference type="iPTMnet" id="Q78EJ9"/>
<dbReference type="PhosphoSitePlus" id="Q78EJ9"/>
<dbReference type="PaxDb" id="10116-ENSRNOP00000062898"/>
<dbReference type="Ensembl" id="ENSRNOT00000004649.7">
    <molecule id="Q78EJ9-2"/>
    <property type="protein sequence ID" value="ENSRNOP00000004649.6"/>
    <property type="gene ID" value="ENSRNOG00000003468.9"/>
</dbReference>
<dbReference type="Ensembl" id="ENSRNOT00000067005.5">
    <molecule id="Q78EJ9-1"/>
    <property type="protein sequence ID" value="ENSRNOP00000062898.3"/>
    <property type="gene ID" value="ENSRNOG00000003468.9"/>
</dbReference>
<dbReference type="GeneID" id="170808"/>
<dbReference type="KEGG" id="rno:170808"/>
<dbReference type="UCSC" id="RGD:620085">
    <molecule id="Q78EJ9-1"/>
    <property type="organism name" value="rat"/>
</dbReference>
<dbReference type="AGR" id="RGD:620085"/>
<dbReference type="CTD" id="388743"/>
<dbReference type="RGD" id="620085">
    <property type="gene designation" value="Capn8"/>
</dbReference>
<dbReference type="eggNOG" id="KOG0045">
    <property type="taxonomic scope" value="Eukaryota"/>
</dbReference>
<dbReference type="GeneTree" id="ENSGT00940000160090"/>
<dbReference type="HOGENOM" id="CLU_010982_0_1_1"/>
<dbReference type="InParanoid" id="Q78EJ9"/>
<dbReference type="OrthoDB" id="424753at2759"/>
<dbReference type="PhylomeDB" id="Q78EJ9"/>
<dbReference type="TreeFam" id="TF314748"/>
<dbReference type="Reactome" id="R-RNO-1474228">
    <property type="pathway name" value="Degradation of the extracellular matrix"/>
</dbReference>
<dbReference type="PRO" id="PR:Q78EJ9"/>
<dbReference type="Proteomes" id="UP000002494">
    <property type="component" value="Chromosome 13"/>
</dbReference>
<dbReference type="Bgee" id="ENSRNOG00000003468">
    <property type="expression patterns" value="Expressed in stomach and 8 other cell types or tissues"/>
</dbReference>
<dbReference type="GO" id="GO:0005737">
    <property type="term" value="C:cytoplasm"/>
    <property type="evidence" value="ECO:0000318"/>
    <property type="project" value="GO_Central"/>
</dbReference>
<dbReference type="GO" id="GO:0005794">
    <property type="term" value="C:Golgi apparatus"/>
    <property type="evidence" value="ECO:0007669"/>
    <property type="project" value="UniProtKB-SubCell"/>
</dbReference>
<dbReference type="GO" id="GO:0005509">
    <property type="term" value="F:calcium ion binding"/>
    <property type="evidence" value="ECO:0007669"/>
    <property type="project" value="InterPro"/>
</dbReference>
<dbReference type="GO" id="GO:0004198">
    <property type="term" value="F:calcium-dependent cysteine-type endopeptidase activity"/>
    <property type="evidence" value="ECO:0000266"/>
    <property type="project" value="RGD"/>
</dbReference>
<dbReference type="GO" id="GO:0042802">
    <property type="term" value="F:identical protein binding"/>
    <property type="evidence" value="ECO:0000266"/>
    <property type="project" value="RGD"/>
</dbReference>
<dbReference type="GO" id="GO:1990092">
    <property type="term" value="P:calcium-dependent self proteolysis"/>
    <property type="evidence" value="ECO:0000266"/>
    <property type="project" value="RGD"/>
</dbReference>
<dbReference type="GO" id="GO:0006508">
    <property type="term" value="P:proteolysis"/>
    <property type="evidence" value="ECO:0000318"/>
    <property type="project" value="GO_Central"/>
</dbReference>
<dbReference type="CDD" id="cd00214">
    <property type="entry name" value="Calpain_III"/>
    <property type="match status" value="1"/>
</dbReference>
<dbReference type="CDD" id="cd00044">
    <property type="entry name" value="CysPc"/>
    <property type="match status" value="1"/>
</dbReference>
<dbReference type="FunFam" id="2.60.120.380:FF:000001">
    <property type="entry name" value="Calpain-1 catalytic subunit"/>
    <property type="match status" value="1"/>
</dbReference>
<dbReference type="FunFam" id="3.90.70.10:FF:000001">
    <property type="entry name" value="Calpain-1 catalytic subunit"/>
    <property type="match status" value="1"/>
</dbReference>
<dbReference type="FunFam" id="1.10.238.10:FF:000099">
    <property type="entry name" value="calpain-2 catalytic subunit"/>
    <property type="match status" value="1"/>
</dbReference>
<dbReference type="Gene3D" id="2.60.120.380">
    <property type="match status" value="1"/>
</dbReference>
<dbReference type="Gene3D" id="3.90.70.10">
    <property type="entry name" value="Cysteine proteinases"/>
    <property type="match status" value="1"/>
</dbReference>
<dbReference type="Gene3D" id="1.10.238.10">
    <property type="entry name" value="EF-hand"/>
    <property type="match status" value="1"/>
</dbReference>
<dbReference type="InterPro" id="IPR033883">
    <property type="entry name" value="C2_III"/>
</dbReference>
<dbReference type="InterPro" id="IPR022684">
    <property type="entry name" value="Calpain_cysteine_protease"/>
</dbReference>
<dbReference type="InterPro" id="IPR022682">
    <property type="entry name" value="Calpain_domain_III"/>
</dbReference>
<dbReference type="InterPro" id="IPR022683">
    <property type="entry name" value="Calpain_III"/>
</dbReference>
<dbReference type="InterPro" id="IPR036213">
    <property type="entry name" value="Calpain_III_sf"/>
</dbReference>
<dbReference type="InterPro" id="IPR011992">
    <property type="entry name" value="EF-hand-dom_pair"/>
</dbReference>
<dbReference type="InterPro" id="IPR002048">
    <property type="entry name" value="EF_hand_dom"/>
</dbReference>
<dbReference type="InterPro" id="IPR038765">
    <property type="entry name" value="Papain-like_cys_pep_sf"/>
</dbReference>
<dbReference type="InterPro" id="IPR000169">
    <property type="entry name" value="Pept_cys_AS"/>
</dbReference>
<dbReference type="InterPro" id="IPR001300">
    <property type="entry name" value="Peptidase_C2_calpain_cat"/>
</dbReference>
<dbReference type="PANTHER" id="PTHR10183">
    <property type="entry name" value="CALPAIN"/>
    <property type="match status" value="1"/>
</dbReference>
<dbReference type="PANTHER" id="PTHR10183:SF374">
    <property type="entry name" value="CALPAIN-8"/>
    <property type="match status" value="1"/>
</dbReference>
<dbReference type="Pfam" id="PF01067">
    <property type="entry name" value="Calpain_III"/>
    <property type="match status" value="1"/>
</dbReference>
<dbReference type="Pfam" id="PF00648">
    <property type="entry name" value="Peptidase_C2"/>
    <property type="match status" value="1"/>
</dbReference>
<dbReference type="PRINTS" id="PR00704">
    <property type="entry name" value="CALPAIN"/>
</dbReference>
<dbReference type="SMART" id="SM00720">
    <property type="entry name" value="calpain_III"/>
    <property type="match status" value="1"/>
</dbReference>
<dbReference type="SMART" id="SM00230">
    <property type="entry name" value="CysPc"/>
    <property type="match status" value="1"/>
</dbReference>
<dbReference type="SMART" id="SM00054">
    <property type="entry name" value="EFh"/>
    <property type="match status" value="2"/>
</dbReference>
<dbReference type="SUPFAM" id="SSF49758">
    <property type="entry name" value="Calpain large subunit, middle domain (domain III)"/>
    <property type="match status" value="1"/>
</dbReference>
<dbReference type="SUPFAM" id="SSF54001">
    <property type="entry name" value="Cysteine proteinases"/>
    <property type="match status" value="1"/>
</dbReference>
<dbReference type="SUPFAM" id="SSF47473">
    <property type="entry name" value="EF-hand"/>
    <property type="match status" value="1"/>
</dbReference>
<dbReference type="PROSITE" id="PS50203">
    <property type="entry name" value="CALPAIN_CAT"/>
    <property type="match status" value="1"/>
</dbReference>
<dbReference type="PROSITE" id="PS00018">
    <property type="entry name" value="EF_HAND_1"/>
    <property type="match status" value="1"/>
</dbReference>
<dbReference type="PROSITE" id="PS50222">
    <property type="entry name" value="EF_HAND_2"/>
    <property type="match status" value="4"/>
</dbReference>
<dbReference type="PROSITE" id="PS00139">
    <property type="entry name" value="THIOL_PROTEASE_CYS"/>
    <property type="match status" value="1"/>
</dbReference>
<feature type="chain" id="PRO_0000349282" description="Calpain-8">
    <location>
        <begin position="1"/>
        <end position="703"/>
    </location>
</feature>
<feature type="domain" description="Calpain catalytic" evidence="2">
    <location>
        <begin position="45"/>
        <end position="344"/>
    </location>
</feature>
<feature type="domain" description="EF-hand 1" evidence="3">
    <location>
        <begin position="532"/>
        <end position="566"/>
    </location>
</feature>
<feature type="domain" description="EF-hand 2" evidence="3">
    <location>
        <begin position="575"/>
        <end position="608"/>
    </location>
</feature>
<feature type="domain" description="EF-hand 3" evidence="3">
    <location>
        <begin position="605"/>
        <end position="640"/>
    </location>
</feature>
<feature type="domain" description="EF-hand 4" evidence="3">
    <location>
        <begin position="670"/>
        <end position="703"/>
    </location>
</feature>
<feature type="region of interest" description="Domain III">
    <location>
        <begin position="355"/>
        <end position="512"/>
    </location>
</feature>
<feature type="region of interest" description="Linker" evidence="1">
    <location>
        <begin position="513"/>
        <end position="531"/>
    </location>
</feature>
<feature type="region of interest" description="Domain IV" evidence="1">
    <location>
        <begin position="532"/>
        <end position="703"/>
    </location>
</feature>
<feature type="active site" evidence="1">
    <location>
        <position position="105"/>
    </location>
</feature>
<feature type="active site" evidence="1">
    <location>
        <position position="262"/>
    </location>
</feature>
<feature type="active site" evidence="1">
    <location>
        <position position="286"/>
    </location>
</feature>
<feature type="binding site" evidence="3">
    <location>
        <position position="588"/>
    </location>
    <ligand>
        <name>Ca(2+)</name>
        <dbReference type="ChEBI" id="CHEBI:29108"/>
        <label>1</label>
    </ligand>
</feature>
<feature type="binding site" evidence="3">
    <location>
        <position position="590"/>
    </location>
    <ligand>
        <name>Ca(2+)</name>
        <dbReference type="ChEBI" id="CHEBI:29108"/>
        <label>1</label>
    </ligand>
</feature>
<feature type="binding site" evidence="3">
    <location>
        <position position="592"/>
    </location>
    <ligand>
        <name>Ca(2+)</name>
        <dbReference type="ChEBI" id="CHEBI:29108"/>
        <label>1</label>
    </ligand>
</feature>
<feature type="binding site" evidence="3">
    <location>
        <position position="594"/>
    </location>
    <ligand>
        <name>Ca(2+)</name>
        <dbReference type="ChEBI" id="CHEBI:29108"/>
        <label>1</label>
    </ligand>
</feature>
<feature type="binding site" evidence="3">
    <location>
        <position position="599"/>
    </location>
    <ligand>
        <name>Ca(2+)</name>
        <dbReference type="ChEBI" id="CHEBI:29108"/>
        <label>1</label>
    </ligand>
</feature>
<feature type="binding site" evidence="7">
    <location>
        <position position="618"/>
    </location>
    <ligand>
        <name>Ca(2+)</name>
        <dbReference type="ChEBI" id="CHEBI:29108"/>
        <label>2</label>
    </ligand>
</feature>
<feature type="binding site" evidence="7">
    <location>
        <position position="620"/>
    </location>
    <ligand>
        <name>Ca(2+)</name>
        <dbReference type="ChEBI" id="CHEBI:29108"/>
        <label>2</label>
    </ligand>
</feature>
<feature type="binding site" evidence="7">
    <location>
        <position position="624"/>
    </location>
    <ligand>
        <name>Ca(2+)</name>
        <dbReference type="ChEBI" id="CHEBI:29108"/>
        <label>2</label>
    </ligand>
</feature>
<feature type="binding site" evidence="7">
    <location>
        <position position="629"/>
    </location>
    <ligand>
        <name>Ca(2+)</name>
        <dbReference type="ChEBI" id="CHEBI:29108"/>
        <label>2</label>
    </ligand>
</feature>
<feature type="splice variant" id="VSP_035308" description="In isoform 2." evidence="6">
    <original>TY</original>
    <variation>SS</variation>
    <location>
        <begin position="380"/>
        <end position="381"/>
    </location>
</feature>
<feature type="splice variant" id="VSP_035309" description="In isoform 2." evidence="6">
    <location>
        <begin position="382"/>
        <end position="703"/>
    </location>
</feature>
<feature type="sequence conflict" description="In Ref. 1; BAA03369." evidence="7" ref="1">
    <original>G</original>
    <variation>V</variation>
    <location>
        <position position="103"/>
    </location>
</feature>
<sequence>MAALAAGVSKQRAVAEGLGSNQNAVKYLGQDFETLRKQCLNSGVLFKDPEFPACPSALGYKDLGPGSPDTQGIVWKRPTELCPNPQFIVGGATRTDIRQGGLGDCWLLAAIASLTLNEKLLYRVLPRDQSFQKDYAGIFHFQFWQYGEWVEVVIDDRLPTKNGQLLFLHSEEGNEFWSALLEKAYAKLNGSYEALVGGSTIEGFEDFTGGISEFYDLKKPPENLYYIIQKALRKGSLLGCSIDVSTAAEAEATTRQKLVKGHAYSVTGVEEVNFHGRPEKLIRLRNPWGEVEWSGAWSDNAPEWNYIDPRRKEELDKKAEDGEFWMSFSDFLKQYSRLEICNLSPDSLSSEEIHKWNLVLFNGRWTRGSTAGGCLNYPGTYWTNPQFKIHLDEVDEDQEEGTSEPCCTVLLGLMQKNRRRQKRIGQGMLSIGYAVYQIPKELESHTDAHLGRDFFLGRQPSTCSSTYMNLREVSSRVRLPPGQYLVVPSTFEPFKDGDFCLRVFSEKKAKALEIGDTVSGHPHEPHPRDMDEEDEHVRSLFEEFVGKDSEISANQLKRVLNEVLSKRTDMKFDGFNINTCREMISLLDSDGTGSLGPMEFKTLWLKIRTYLEIFQEMDHNHVGTIEAHEMRTALKKAGFTLNNQVQQTIAMRYACSKLGVDFNGFVACMIRLETLFKLFRLLDKDQNGIVQLSLAEWLCCVLV</sequence>
<proteinExistence type="evidence at transcript level"/>
<comment type="function">
    <text evidence="1">Calcium-regulated non-lysosomal thiol-protease. Involved in membrane trafficking in the gastric surface mucus cells (pit cells) and may involve the membrane trafficking of mucus cells via interactions with coat protein. Proteolytically cleaves the beta-subunit of coatomer complex (By similarity).</text>
</comment>
<comment type="catalytic activity">
    <reaction>
        <text>Broad endopeptidase specificity.</text>
        <dbReference type="EC" id="3.4.22.53"/>
    </reaction>
</comment>
<comment type="cofactor">
    <cofactor evidence="7">
        <name>Ca(2+)</name>
        <dbReference type="ChEBI" id="CHEBI:29108"/>
    </cofactor>
    <text evidence="7">Binds 2 calcium ions.</text>
</comment>
<comment type="subunit">
    <text evidence="1">Monomer and homooligomer. Interacts with COPS1/GPS1, COPB1, EYA2, NME2, NME4 and TOMM70 (By similarity).</text>
</comment>
<comment type="subcellular location">
    <subcellularLocation>
        <location evidence="5">Cytoplasm</location>
    </subcellularLocation>
    <subcellularLocation>
        <location evidence="1">Golgi apparatus</location>
    </subcellularLocation>
</comment>
<comment type="alternative products">
    <event type="alternative splicing"/>
    <isoform>
        <id>Q78EJ9-1</id>
        <name>1</name>
        <name>nCL-2</name>
        <sequence type="displayed"/>
    </isoform>
    <isoform>
        <id>Q78EJ9-2</id>
        <name>2</name>
        <name>Calpain 8b</name>
        <name>nCL-2'</name>
        <sequence type="described" ref="VSP_035308 VSP_035309"/>
    </isoform>
</comment>
<comment type="tissue specificity">
    <text evidence="4 5">Predominantly expressed in the stomach. Localizes strictly to the surface mucus cells in the gastric epithelium and the mucus-secreting goblet cells in the duodenum. Detected in the pituitary after estrogen stimulation.</text>
</comment>
<comment type="domain">
    <text evidence="1">The domain III mediates oligomerization.</text>
</comment>
<comment type="PTM">
    <text evidence="1">Undergoes autolytic cleavage between Ala-5 and Ala-6 which gives rise to fragments extending from Ala-6 to the C-terminus, Ala-6 to the EF-hand 2 domain and from Ala-6 to the beginning of domain III.</text>
</comment>
<comment type="similarity">
    <text evidence="7">Belongs to the peptidase C2 family.</text>
</comment>
<name>CAN8_RAT</name>